<gene>
    <name evidence="1" type="primary">tmk</name>
    <name type="ordered locus">HAPS_1742</name>
</gene>
<sequence>MRGKFIVIEGLEGAGKSNAQRIVSETLAAHGIEFITTREPGGTPIAEALRNLWKEGEDGEHTTDKAEVLMIYAARIQLVETVIEPALASGKWVVGDRHNMSSQAYQGGGRGLAELVDEVGSAILGDFEPDFTIYLDIEPSIGLERARGRGALDRIEQLDIDFFHRTRERYVSLVKDNPKAVLINAEPAIEQVSADIQQAVEIFLTSEK</sequence>
<name>KTHY_GLAP5</name>
<accession>B8F7G0</accession>
<proteinExistence type="inferred from homology"/>
<organism>
    <name type="scientific">Glaesserella parasuis serovar 5 (strain SH0165)</name>
    <name type="common">Haemophilus parasuis</name>
    <dbReference type="NCBI Taxonomy" id="557723"/>
    <lineage>
        <taxon>Bacteria</taxon>
        <taxon>Pseudomonadati</taxon>
        <taxon>Pseudomonadota</taxon>
        <taxon>Gammaproteobacteria</taxon>
        <taxon>Pasteurellales</taxon>
        <taxon>Pasteurellaceae</taxon>
        <taxon>Glaesserella</taxon>
    </lineage>
</organism>
<reference key="1">
    <citation type="journal article" date="2009" name="J. Bacteriol.">
        <title>Complete genome sequence of Haemophilus parasuis SH0165.</title>
        <authorList>
            <person name="Yue M."/>
            <person name="Yang F."/>
            <person name="Yang J."/>
            <person name="Bei W."/>
            <person name="Cai X."/>
            <person name="Chen L."/>
            <person name="Dong J."/>
            <person name="Zhou R."/>
            <person name="Jin M."/>
            <person name="Jin Q."/>
            <person name="Chen H."/>
        </authorList>
    </citation>
    <scope>NUCLEOTIDE SEQUENCE [LARGE SCALE GENOMIC DNA]</scope>
    <source>
        <strain>SH0165</strain>
    </source>
</reference>
<feature type="chain" id="PRO_1000123578" description="Thymidylate kinase">
    <location>
        <begin position="1"/>
        <end position="208"/>
    </location>
</feature>
<feature type="binding site" evidence="1">
    <location>
        <begin position="10"/>
        <end position="17"/>
    </location>
    <ligand>
        <name>ATP</name>
        <dbReference type="ChEBI" id="CHEBI:30616"/>
    </ligand>
</feature>
<comment type="function">
    <text evidence="1">Phosphorylation of dTMP to form dTDP in both de novo and salvage pathways of dTTP synthesis.</text>
</comment>
<comment type="catalytic activity">
    <reaction evidence="1">
        <text>dTMP + ATP = dTDP + ADP</text>
        <dbReference type="Rhea" id="RHEA:13517"/>
        <dbReference type="ChEBI" id="CHEBI:30616"/>
        <dbReference type="ChEBI" id="CHEBI:58369"/>
        <dbReference type="ChEBI" id="CHEBI:63528"/>
        <dbReference type="ChEBI" id="CHEBI:456216"/>
        <dbReference type="EC" id="2.7.4.9"/>
    </reaction>
</comment>
<comment type="similarity">
    <text evidence="1">Belongs to the thymidylate kinase family.</text>
</comment>
<protein>
    <recommendedName>
        <fullName evidence="1">Thymidylate kinase</fullName>
        <ecNumber evidence="1">2.7.4.9</ecNumber>
    </recommendedName>
    <alternativeName>
        <fullName evidence="1">dTMP kinase</fullName>
    </alternativeName>
</protein>
<dbReference type="EC" id="2.7.4.9" evidence="1"/>
<dbReference type="EMBL" id="CP001321">
    <property type="protein sequence ID" value="ACL33262.1"/>
    <property type="molecule type" value="Genomic_DNA"/>
</dbReference>
<dbReference type="RefSeq" id="WP_015939900.1">
    <property type="nucleotide sequence ID" value="NC_011852.1"/>
</dbReference>
<dbReference type="SMR" id="B8F7G0"/>
<dbReference type="STRING" id="557723.HAPS_1742"/>
<dbReference type="GeneID" id="66619754"/>
<dbReference type="KEGG" id="hap:HAPS_1742"/>
<dbReference type="PATRIC" id="fig|557723.8.peg.1722"/>
<dbReference type="HOGENOM" id="CLU_049131_0_1_6"/>
<dbReference type="Proteomes" id="UP000006743">
    <property type="component" value="Chromosome"/>
</dbReference>
<dbReference type="GO" id="GO:0005829">
    <property type="term" value="C:cytosol"/>
    <property type="evidence" value="ECO:0007669"/>
    <property type="project" value="TreeGrafter"/>
</dbReference>
<dbReference type="GO" id="GO:0005524">
    <property type="term" value="F:ATP binding"/>
    <property type="evidence" value="ECO:0007669"/>
    <property type="project" value="UniProtKB-UniRule"/>
</dbReference>
<dbReference type="GO" id="GO:0004798">
    <property type="term" value="F:dTMP kinase activity"/>
    <property type="evidence" value="ECO:0007669"/>
    <property type="project" value="UniProtKB-UniRule"/>
</dbReference>
<dbReference type="GO" id="GO:0006233">
    <property type="term" value="P:dTDP biosynthetic process"/>
    <property type="evidence" value="ECO:0007669"/>
    <property type="project" value="InterPro"/>
</dbReference>
<dbReference type="GO" id="GO:0006235">
    <property type="term" value="P:dTTP biosynthetic process"/>
    <property type="evidence" value="ECO:0007669"/>
    <property type="project" value="UniProtKB-UniRule"/>
</dbReference>
<dbReference type="GO" id="GO:0006227">
    <property type="term" value="P:dUDP biosynthetic process"/>
    <property type="evidence" value="ECO:0007669"/>
    <property type="project" value="TreeGrafter"/>
</dbReference>
<dbReference type="CDD" id="cd01672">
    <property type="entry name" value="TMPK"/>
    <property type="match status" value="1"/>
</dbReference>
<dbReference type="FunFam" id="3.40.50.300:FF:000225">
    <property type="entry name" value="Thymidylate kinase"/>
    <property type="match status" value="1"/>
</dbReference>
<dbReference type="Gene3D" id="3.40.50.300">
    <property type="entry name" value="P-loop containing nucleotide triphosphate hydrolases"/>
    <property type="match status" value="1"/>
</dbReference>
<dbReference type="HAMAP" id="MF_00165">
    <property type="entry name" value="Thymidylate_kinase"/>
    <property type="match status" value="1"/>
</dbReference>
<dbReference type="InterPro" id="IPR027417">
    <property type="entry name" value="P-loop_NTPase"/>
</dbReference>
<dbReference type="InterPro" id="IPR039430">
    <property type="entry name" value="Thymidylate_kin-like_dom"/>
</dbReference>
<dbReference type="InterPro" id="IPR018095">
    <property type="entry name" value="Thymidylate_kin_CS"/>
</dbReference>
<dbReference type="InterPro" id="IPR018094">
    <property type="entry name" value="Thymidylate_kinase"/>
</dbReference>
<dbReference type="NCBIfam" id="TIGR00041">
    <property type="entry name" value="DTMP_kinase"/>
    <property type="match status" value="1"/>
</dbReference>
<dbReference type="PANTHER" id="PTHR10344">
    <property type="entry name" value="THYMIDYLATE KINASE"/>
    <property type="match status" value="1"/>
</dbReference>
<dbReference type="PANTHER" id="PTHR10344:SF4">
    <property type="entry name" value="UMP-CMP KINASE 2, MITOCHONDRIAL"/>
    <property type="match status" value="1"/>
</dbReference>
<dbReference type="Pfam" id="PF02223">
    <property type="entry name" value="Thymidylate_kin"/>
    <property type="match status" value="1"/>
</dbReference>
<dbReference type="SUPFAM" id="SSF52540">
    <property type="entry name" value="P-loop containing nucleoside triphosphate hydrolases"/>
    <property type="match status" value="1"/>
</dbReference>
<dbReference type="PROSITE" id="PS01331">
    <property type="entry name" value="THYMIDYLATE_KINASE"/>
    <property type="match status" value="1"/>
</dbReference>
<evidence type="ECO:0000255" key="1">
    <source>
        <dbReference type="HAMAP-Rule" id="MF_00165"/>
    </source>
</evidence>
<keyword id="KW-0067">ATP-binding</keyword>
<keyword id="KW-0418">Kinase</keyword>
<keyword id="KW-0545">Nucleotide biosynthesis</keyword>
<keyword id="KW-0547">Nucleotide-binding</keyword>
<keyword id="KW-1185">Reference proteome</keyword>
<keyword id="KW-0808">Transferase</keyword>